<evidence type="ECO:0000250" key="1"/>
<evidence type="ECO:0000250" key="2">
    <source>
        <dbReference type="UniProtKB" id="Q53TQ3"/>
    </source>
</evidence>
<evidence type="ECO:0000256" key="3">
    <source>
        <dbReference type="SAM" id="MobiDB-lite"/>
    </source>
</evidence>
<evidence type="ECO:0000305" key="4"/>
<name>IN80D_XENLA</name>
<proteinExistence type="evidence at transcript level"/>
<sequence>MYEGKHIHFSEVDNKPLCSYSPKLCKQRRLNGYAFCIRHVLEDKTAPFKQCEYVAKYNSQRCTNPIPKSEDRRYCNSHLQVLGFIPKKERKKKNDALEDVKTKHQMETMAFSLTVPPLALKMPNGHDGLNLSPPGARLPIHYLETDLEDPFSFEEEEEELKKGTSVKKKLQSKLAQNWQRLRETEIVNVHQEHFSPHPAHSPLQSPSLQEQHTLVQPISTLPKPTGLPQNLVCKSPQPSNISQPVQGASPVTHTVAQTRHQSSKRPFPVLPPVTELPRNDRIQLAATALPAYSSYVSRLQRLVKLCTRKQQLDTDLFPHFGLDWSEDSGEEQEDSDQSSPYRTAWSFRESFRYDCKKLDIEEAHSRSSRIAQLCTYFQQKYKHLCRLERAESCQKKYRHTFRRALQQAAHRESETTGQLLQELRTTTCIRTRPIQPELRGTEVTLCSATISNGACRNRALPYTRNCFQHILSNSSQQLFSSCTAKFADGQQCSVPVFDITHQTPLCEEHAKKMDNFLRGDNSRKVQHHQQRKPRKKTKPPALTKKTKKKRRRGPRRPQKPIPPAVPQGNLCMPSSLSLPVEVSSIRSPSTPNLSTEELPDDITSEITDIPHDLELNQEDFSDVLPRLPDDLQDFDFFEGKNGDLLPTTEEAEELERALQAVTSLECLSSIAVLTQADNATGQDLSDRGISAFSTGSGGSVIQSLSREDHPDLGDLLNGHIGHNFASLELDENLLGSTTLSNPSATLSGHIQGQFSSPANVGLSSATLISRSGERLGREVMSHHVDAAAPILDKQRVSGALYSGMVKHSAEWV</sequence>
<reference key="1">
    <citation type="submission" date="2005-04" db="EMBL/GenBank/DDBJ databases">
        <authorList>
            <consortium name="NIH - Xenopus Gene Collection (XGC) project"/>
        </authorList>
    </citation>
    <scope>NUCLEOTIDE SEQUENCE [LARGE SCALE MRNA]</scope>
    <source>
        <tissue>Oocyte</tissue>
    </source>
</reference>
<feature type="chain" id="PRO_0000319588" description="INO80 complex subunit D">
    <location>
        <begin position="1"/>
        <end position="812"/>
    </location>
</feature>
<feature type="region of interest" description="Disordered" evidence="3">
    <location>
        <begin position="521"/>
        <end position="573"/>
    </location>
</feature>
<feature type="region of interest" description="Disordered" evidence="3">
    <location>
        <begin position="581"/>
        <end position="600"/>
    </location>
</feature>
<feature type="compositionally biased region" description="Basic residues" evidence="3">
    <location>
        <begin position="524"/>
        <end position="558"/>
    </location>
</feature>
<feature type="compositionally biased region" description="Polar residues" evidence="3">
    <location>
        <begin position="585"/>
        <end position="595"/>
    </location>
</feature>
<keyword id="KW-0227">DNA damage</keyword>
<keyword id="KW-0233">DNA recombination</keyword>
<keyword id="KW-0234">DNA repair</keyword>
<keyword id="KW-0539">Nucleus</keyword>
<keyword id="KW-1185">Reference proteome</keyword>
<keyword id="KW-0804">Transcription</keyword>
<keyword id="KW-0805">Transcription regulation</keyword>
<comment type="function">
    <text evidence="1">Putative regulatory component of the chromatin remodeling INO80 complex which is involved in transcriptional regulation, DNA replication and probably DNA repair.</text>
</comment>
<comment type="subunit">
    <text evidence="1">Component of the chromatin-remodeling INO80 complex.</text>
</comment>
<comment type="subcellular location">
    <subcellularLocation>
        <location evidence="1">Nucleus</location>
    </subcellularLocation>
</comment>
<comment type="similarity">
    <text evidence="4">Belongs to the INO80D family.</text>
</comment>
<protein>
    <recommendedName>
        <fullName evidence="2">INO80 complex subunit D</fullName>
    </recommendedName>
</protein>
<dbReference type="EMBL" id="BC093537">
    <property type="protein sequence ID" value="AAH93537.1"/>
    <property type="molecule type" value="mRNA"/>
</dbReference>
<dbReference type="RefSeq" id="NP_001090008.1">
    <property type="nucleotide sequence ID" value="NM_001096539.1"/>
</dbReference>
<dbReference type="DNASU" id="735080"/>
<dbReference type="Proteomes" id="UP000186698">
    <property type="component" value="Unplaced"/>
</dbReference>
<dbReference type="Bgee" id="735080">
    <property type="expression patterns" value="Expressed in blastula and 11 other cell types or tissues"/>
</dbReference>
<dbReference type="GO" id="GO:0005634">
    <property type="term" value="C:nucleus"/>
    <property type="evidence" value="ECO:0000318"/>
    <property type="project" value="GO_Central"/>
</dbReference>
<dbReference type="GO" id="GO:0006310">
    <property type="term" value="P:DNA recombination"/>
    <property type="evidence" value="ECO:0007669"/>
    <property type="project" value="UniProtKB-KW"/>
</dbReference>
<dbReference type="GO" id="GO:0006281">
    <property type="term" value="P:DNA repair"/>
    <property type="evidence" value="ECO:0007669"/>
    <property type="project" value="UniProtKB-KW"/>
</dbReference>
<dbReference type="InterPro" id="IPR025927">
    <property type="entry name" value="Potential_DNA-bd"/>
</dbReference>
<dbReference type="PANTHER" id="PTHR16198">
    <property type="match status" value="1"/>
</dbReference>
<dbReference type="PANTHER" id="PTHR16198:SF2">
    <property type="entry name" value="INO80 COMPLEX SUBUNIT D"/>
    <property type="match status" value="1"/>
</dbReference>
<dbReference type="Pfam" id="PF13891">
    <property type="entry name" value="zf-C3Hc3H"/>
    <property type="match status" value="2"/>
</dbReference>
<accession>Q566I1</accession>
<organism>
    <name type="scientific">Xenopus laevis</name>
    <name type="common">African clawed frog</name>
    <dbReference type="NCBI Taxonomy" id="8355"/>
    <lineage>
        <taxon>Eukaryota</taxon>
        <taxon>Metazoa</taxon>
        <taxon>Chordata</taxon>
        <taxon>Craniata</taxon>
        <taxon>Vertebrata</taxon>
        <taxon>Euteleostomi</taxon>
        <taxon>Amphibia</taxon>
        <taxon>Batrachia</taxon>
        <taxon>Anura</taxon>
        <taxon>Pipoidea</taxon>
        <taxon>Pipidae</taxon>
        <taxon>Xenopodinae</taxon>
        <taxon>Xenopus</taxon>
        <taxon>Xenopus</taxon>
    </lineage>
</organism>
<gene>
    <name evidence="2" type="primary">ino80d</name>
</gene>